<gene>
    <name type="primary">ygeP</name>
    <name type="ordered locus">b2862</name>
    <name type="ordered locus">JW2831</name>
</gene>
<proteinExistence type="uncertain"/>
<protein>
    <recommendedName>
        <fullName>Putative protein YgeP</fullName>
    </recommendedName>
</protein>
<accession>Q46796</accession>
<accession>Q2M9X7</accession>
<reference key="1">
    <citation type="journal article" date="1997" name="Science">
        <title>The complete genome sequence of Escherichia coli K-12.</title>
        <authorList>
            <person name="Blattner F.R."/>
            <person name="Plunkett G. III"/>
            <person name="Bloch C.A."/>
            <person name="Perna N.T."/>
            <person name="Burland V."/>
            <person name="Riley M."/>
            <person name="Collado-Vides J."/>
            <person name="Glasner J.D."/>
            <person name="Rode C.K."/>
            <person name="Mayhew G.F."/>
            <person name="Gregor J."/>
            <person name="Davis N.W."/>
            <person name="Kirkpatrick H.A."/>
            <person name="Goeden M.A."/>
            <person name="Rose D.J."/>
            <person name="Mau B."/>
            <person name="Shao Y."/>
        </authorList>
    </citation>
    <scope>NUCLEOTIDE SEQUENCE [LARGE SCALE GENOMIC DNA]</scope>
    <source>
        <strain>K12 / MG1655 / ATCC 47076</strain>
    </source>
</reference>
<reference key="2">
    <citation type="journal article" date="2006" name="Mol. Syst. Biol.">
        <title>Highly accurate genome sequences of Escherichia coli K-12 strains MG1655 and W3110.</title>
        <authorList>
            <person name="Hayashi K."/>
            <person name="Morooka N."/>
            <person name="Yamamoto Y."/>
            <person name="Fujita K."/>
            <person name="Isono K."/>
            <person name="Choi S."/>
            <person name="Ohtsubo E."/>
            <person name="Baba T."/>
            <person name="Wanner B.L."/>
            <person name="Mori H."/>
            <person name="Horiuchi T."/>
        </authorList>
    </citation>
    <scope>NUCLEOTIDE SEQUENCE [LARGE SCALE GENOMIC DNA]</scope>
    <source>
        <strain>K12 / W3110 / ATCC 27325 / DSM 5911</strain>
    </source>
</reference>
<dbReference type="EMBL" id="U28375">
    <property type="protein sequence ID" value="AAA83044.1"/>
    <property type="molecule type" value="Genomic_DNA"/>
</dbReference>
<dbReference type="EMBL" id="U00096">
    <property type="status" value="NOT_ANNOTATED_CDS"/>
    <property type="molecule type" value="Genomic_DNA"/>
</dbReference>
<dbReference type="EMBL" id="AP009048">
    <property type="protein sequence ID" value="BAE76929.1"/>
    <property type="molecule type" value="Genomic_DNA"/>
</dbReference>
<dbReference type="PIR" id="G65069">
    <property type="entry name" value="G65069"/>
</dbReference>
<dbReference type="BioGRID" id="4262316">
    <property type="interactions" value="127"/>
</dbReference>
<dbReference type="DIP" id="DIP-12154N"/>
<dbReference type="FunCoup" id="Q46796">
    <property type="interactions" value="3"/>
</dbReference>
<dbReference type="IntAct" id="Q46796">
    <property type="interactions" value="2"/>
</dbReference>
<dbReference type="KEGG" id="ecj:JW2831"/>
<dbReference type="PATRIC" id="fig|83333.103.peg.3758"/>
<dbReference type="EchoBASE" id="EB2858"/>
<dbReference type="eggNOG" id="COG3387">
    <property type="taxonomic scope" value="Bacteria"/>
</dbReference>
<dbReference type="HOGENOM" id="CLU_2163672_0_0_6"/>
<dbReference type="InParanoid" id="Q46796"/>
<dbReference type="Proteomes" id="UP000000625">
    <property type="component" value="Chromosome"/>
</dbReference>
<name>YGEP_ECOLI</name>
<organism>
    <name type="scientific">Escherichia coli (strain K12)</name>
    <dbReference type="NCBI Taxonomy" id="83333"/>
    <lineage>
        <taxon>Bacteria</taxon>
        <taxon>Pseudomonadati</taxon>
        <taxon>Pseudomonadota</taxon>
        <taxon>Gammaproteobacteria</taxon>
        <taxon>Enterobacterales</taxon>
        <taxon>Enterobacteriaceae</taxon>
        <taxon>Escherichia</taxon>
    </lineage>
</organism>
<evidence type="ECO:0000305" key="1"/>
<comment type="caution">
    <text evidence="1">Could be the product of a pseudogene. Is missing N- and possibly C-terminal residues compared to orthologs.</text>
</comment>
<feature type="chain" id="PRO_0000169342" description="Putative protein YgeP">
    <location>
        <begin position="1"/>
        <end position="99"/>
    </location>
</feature>
<sequence length="99" mass="11291">MTSGLERLSNLLSKKDSVFVSDLLREAKVNELDETLSTTRLNHLIDKGYERITLQLDLGGESPGYLEKDKHYREADAALLNVIYPTNLSKINTRRKEQV</sequence>
<keyword id="KW-1185">Reference proteome</keyword>